<accession>B8E5U5</accession>
<dbReference type="EC" id="1.2.1.72" evidence="1"/>
<dbReference type="EMBL" id="CP001252">
    <property type="protein sequence ID" value="ACK47948.1"/>
    <property type="molecule type" value="Genomic_DNA"/>
</dbReference>
<dbReference type="RefSeq" id="WP_012588472.1">
    <property type="nucleotide sequence ID" value="NC_011663.1"/>
</dbReference>
<dbReference type="SMR" id="B8E5U5"/>
<dbReference type="KEGG" id="sbp:Sbal223_3464"/>
<dbReference type="HOGENOM" id="CLU_030140_0_2_6"/>
<dbReference type="UniPathway" id="UPA00244">
    <property type="reaction ID" value="UER00309"/>
</dbReference>
<dbReference type="Proteomes" id="UP000002507">
    <property type="component" value="Chromosome"/>
</dbReference>
<dbReference type="GO" id="GO:0005737">
    <property type="term" value="C:cytoplasm"/>
    <property type="evidence" value="ECO:0007669"/>
    <property type="project" value="UniProtKB-SubCell"/>
</dbReference>
<dbReference type="GO" id="GO:0048001">
    <property type="term" value="F:erythrose-4-phosphate dehydrogenase activity"/>
    <property type="evidence" value="ECO:0007669"/>
    <property type="project" value="UniProtKB-UniRule"/>
</dbReference>
<dbReference type="GO" id="GO:0051287">
    <property type="term" value="F:NAD binding"/>
    <property type="evidence" value="ECO:0007669"/>
    <property type="project" value="InterPro"/>
</dbReference>
<dbReference type="GO" id="GO:0050661">
    <property type="term" value="F:NADP binding"/>
    <property type="evidence" value="ECO:0007669"/>
    <property type="project" value="InterPro"/>
</dbReference>
<dbReference type="GO" id="GO:0006006">
    <property type="term" value="P:glucose metabolic process"/>
    <property type="evidence" value="ECO:0007669"/>
    <property type="project" value="InterPro"/>
</dbReference>
<dbReference type="GO" id="GO:0042823">
    <property type="term" value="P:pyridoxal phosphate biosynthetic process"/>
    <property type="evidence" value="ECO:0007669"/>
    <property type="project" value="UniProtKB-UniRule"/>
</dbReference>
<dbReference type="GO" id="GO:0008615">
    <property type="term" value="P:pyridoxine biosynthetic process"/>
    <property type="evidence" value="ECO:0007669"/>
    <property type="project" value="UniProtKB-UniRule"/>
</dbReference>
<dbReference type="CDD" id="cd23937">
    <property type="entry name" value="GAPDH_C_E4PDH"/>
    <property type="match status" value="1"/>
</dbReference>
<dbReference type="CDD" id="cd17892">
    <property type="entry name" value="GAPDH_N_E4PDH"/>
    <property type="match status" value="1"/>
</dbReference>
<dbReference type="FunFam" id="3.30.360.10:FF:000007">
    <property type="entry name" value="D-erythrose-4-phosphate dehydrogenase"/>
    <property type="match status" value="1"/>
</dbReference>
<dbReference type="FunFam" id="3.40.50.720:FF:000001">
    <property type="entry name" value="Glyceraldehyde-3-phosphate dehydrogenase"/>
    <property type="match status" value="1"/>
</dbReference>
<dbReference type="Gene3D" id="3.30.360.10">
    <property type="entry name" value="Dihydrodipicolinate Reductase, domain 2"/>
    <property type="match status" value="1"/>
</dbReference>
<dbReference type="Gene3D" id="3.40.50.720">
    <property type="entry name" value="NAD(P)-binding Rossmann-like Domain"/>
    <property type="match status" value="1"/>
</dbReference>
<dbReference type="HAMAP" id="MF_01640">
    <property type="entry name" value="E4P_dehydrog"/>
    <property type="match status" value="1"/>
</dbReference>
<dbReference type="InterPro" id="IPR006422">
    <property type="entry name" value="E4P_DH_bac"/>
</dbReference>
<dbReference type="InterPro" id="IPR020831">
    <property type="entry name" value="GlycerAld/Erythrose_P_DH"/>
</dbReference>
<dbReference type="InterPro" id="IPR020830">
    <property type="entry name" value="GlycerAld_3-P_DH_AS"/>
</dbReference>
<dbReference type="InterPro" id="IPR020829">
    <property type="entry name" value="GlycerAld_3-P_DH_cat"/>
</dbReference>
<dbReference type="InterPro" id="IPR020828">
    <property type="entry name" value="GlycerAld_3-P_DH_NAD(P)-bd"/>
</dbReference>
<dbReference type="InterPro" id="IPR006424">
    <property type="entry name" value="Glyceraldehyde-3-P_DH_1"/>
</dbReference>
<dbReference type="InterPro" id="IPR036291">
    <property type="entry name" value="NAD(P)-bd_dom_sf"/>
</dbReference>
<dbReference type="NCBIfam" id="TIGR01532">
    <property type="entry name" value="E4PD_g-proteo"/>
    <property type="match status" value="1"/>
</dbReference>
<dbReference type="NCBIfam" id="TIGR01534">
    <property type="entry name" value="GAPDH-I"/>
    <property type="match status" value="1"/>
</dbReference>
<dbReference type="NCBIfam" id="NF010058">
    <property type="entry name" value="PRK13535.1"/>
    <property type="match status" value="1"/>
</dbReference>
<dbReference type="PANTHER" id="PTHR43148">
    <property type="entry name" value="GLYCERALDEHYDE-3-PHOSPHATE DEHYDROGENASE 2"/>
    <property type="match status" value="1"/>
</dbReference>
<dbReference type="Pfam" id="PF02800">
    <property type="entry name" value="Gp_dh_C"/>
    <property type="match status" value="1"/>
</dbReference>
<dbReference type="Pfam" id="PF00044">
    <property type="entry name" value="Gp_dh_N"/>
    <property type="match status" value="1"/>
</dbReference>
<dbReference type="PIRSF" id="PIRSF000149">
    <property type="entry name" value="GAP_DH"/>
    <property type="match status" value="1"/>
</dbReference>
<dbReference type="PRINTS" id="PR00078">
    <property type="entry name" value="G3PDHDRGNASE"/>
</dbReference>
<dbReference type="SMART" id="SM00846">
    <property type="entry name" value="Gp_dh_N"/>
    <property type="match status" value="1"/>
</dbReference>
<dbReference type="SUPFAM" id="SSF55347">
    <property type="entry name" value="Glyceraldehyde-3-phosphate dehydrogenase-like, C-terminal domain"/>
    <property type="match status" value="1"/>
</dbReference>
<dbReference type="SUPFAM" id="SSF51735">
    <property type="entry name" value="NAD(P)-binding Rossmann-fold domains"/>
    <property type="match status" value="1"/>
</dbReference>
<dbReference type="PROSITE" id="PS00071">
    <property type="entry name" value="GAPDH"/>
    <property type="match status" value="1"/>
</dbReference>
<protein>
    <recommendedName>
        <fullName evidence="1">D-erythrose-4-phosphate dehydrogenase</fullName>
        <shortName evidence="1">E4PDH</shortName>
        <ecNumber evidence="1">1.2.1.72</ecNumber>
    </recommendedName>
</protein>
<keyword id="KW-0963">Cytoplasm</keyword>
<keyword id="KW-0520">NAD</keyword>
<keyword id="KW-0560">Oxidoreductase</keyword>
<keyword id="KW-0664">Pyridoxine biosynthesis</keyword>
<reference key="1">
    <citation type="submission" date="2008-12" db="EMBL/GenBank/DDBJ databases">
        <title>Complete sequence of chromosome of Shewanella baltica OS223.</title>
        <authorList>
            <consortium name="US DOE Joint Genome Institute"/>
            <person name="Lucas S."/>
            <person name="Copeland A."/>
            <person name="Lapidus A."/>
            <person name="Glavina del Rio T."/>
            <person name="Dalin E."/>
            <person name="Tice H."/>
            <person name="Bruce D."/>
            <person name="Goodwin L."/>
            <person name="Pitluck S."/>
            <person name="Chertkov O."/>
            <person name="Meincke L."/>
            <person name="Brettin T."/>
            <person name="Detter J.C."/>
            <person name="Han C."/>
            <person name="Kuske C.R."/>
            <person name="Larimer F."/>
            <person name="Land M."/>
            <person name="Hauser L."/>
            <person name="Kyrpides N."/>
            <person name="Ovchinnikova G."/>
            <person name="Brettar I."/>
            <person name="Rodrigues J."/>
            <person name="Konstantinidis K."/>
            <person name="Tiedje J."/>
        </authorList>
    </citation>
    <scope>NUCLEOTIDE SEQUENCE [LARGE SCALE GENOMIC DNA]</scope>
    <source>
        <strain>OS223</strain>
    </source>
</reference>
<gene>
    <name evidence="1" type="primary">epd</name>
    <name type="ordered locus">Sbal223_3464</name>
</gene>
<name>E4PD_SHEB2</name>
<evidence type="ECO:0000255" key="1">
    <source>
        <dbReference type="HAMAP-Rule" id="MF_01640"/>
    </source>
</evidence>
<organism>
    <name type="scientific">Shewanella baltica (strain OS223)</name>
    <dbReference type="NCBI Taxonomy" id="407976"/>
    <lineage>
        <taxon>Bacteria</taxon>
        <taxon>Pseudomonadati</taxon>
        <taxon>Pseudomonadota</taxon>
        <taxon>Gammaproteobacteria</taxon>
        <taxon>Alteromonadales</taxon>
        <taxon>Shewanellaceae</taxon>
        <taxon>Shewanella</taxon>
    </lineage>
</organism>
<comment type="function">
    <text evidence="1">Catalyzes the NAD-dependent conversion of D-erythrose 4-phosphate to 4-phosphoerythronate.</text>
</comment>
<comment type="catalytic activity">
    <reaction evidence="1">
        <text>D-erythrose 4-phosphate + NAD(+) + H2O = 4-phospho-D-erythronate + NADH + 2 H(+)</text>
        <dbReference type="Rhea" id="RHEA:12056"/>
        <dbReference type="ChEBI" id="CHEBI:15377"/>
        <dbReference type="ChEBI" id="CHEBI:15378"/>
        <dbReference type="ChEBI" id="CHEBI:16897"/>
        <dbReference type="ChEBI" id="CHEBI:57540"/>
        <dbReference type="ChEBI" id="CHEBI:57945"/>
        <dbReference type="ChEBI" id="CHEBI:58766"/>
        <dbReference type="EC" id="1.2.1.72"/>
    </reaction>
</comment>
<comment type="pathway">
    <text evidence="1">Cofactor biosynthesis; pyridoxine 5'-phosphate biosynthesis; pyridoxine 5'-phosphate from D-erythrose 4-phosphate: step 1/5.</text>
</comment>
<comment type="subunit">
    <text evidence="1">Homotetramer.</text>
</comment>
<comment type="subcellular location">
    <subcellularLocation>
        <location evidence="1">Cytoplasm</location>
    </subcellularLocation>
</comment>
<comment type="similarity">
    <text evidence="1">Belongs to the glyceraldehyde-3-phosphate dehydrogenase family. Epd subfamily.</text>
</comment>
<feature type="chain" id="PRO_1000186841" description="D-erythrose-4-phosphate dehydrogenase">
    <location>
        <begin position="1"/>
        <end position="338"/>
    </location>
</feature>
<feature type="active site" description="Nucleophile" evidence="1">
    <location>
        <position position="154"/>
    </location>
</feature>
<feature type="binding site" evidence="1">
    <location>
        <begin position="11"/>
        <end position="12"/>
    </location>
    <ligand>
        <name>NAD(+)</name>
        <dbReference type="ChEBI" id="CHEBI:57540"/>
    </ligand>
</feature>
<feature type="binding site" evidence="1">
    <location>
        <begin position="153"/>
        <end position="155"/>
    </location>
    <ligand>
        <name>substrate</name>
    </ligand>
</feature>
<feature type="binding site" evidence="1">
    <location>
        <position position="199"/>
    </location>
    <ligand>
        <name>substrate</name>
    </ligand>
</feature>
<feature type="binding site" evidence="1">
    <location>
        <begin position="212"/>
        <end position="213"/>
    </location>
    <ligand>
        <name>substrate</name>
    </ligand>
</feature>
<feature type="binding site" evidence="1">
    <location>
        <position position="235"/>
    </location>
    <ligand>
        <name>substrate</name>
    </ligand>
</feature>
<feature type="binding site" evidence="1">
    <location>
        <position position="317"/>
    </location>
    <ligand>
        <name>NAD(+)</name>
        <dbReference type="ChEBI" id="CHEBI:57540"/>
    </ligand>
</feature>
<feature type="site" description="Activates thiol group during catalysis" evidence="1">
    <location>
        <position position="181"/>
    </location>
</feature>
<proteinExistence type="inferred from homology"/>
<sequence length="338" mass="37282">MIRVAINGYGRIGRSILRALYESGKRQQMQIVAINELAKPEAIIHLTQYDTTHGRFAHKVKLVDDHMLIGDDAIKILHEPDPTKLPWHEMDIDIVYEATGVLLDRQSCEAHIHAGAKQVLISHPSSADVDGTIVYGVNHDLLRAEHTVVSNASCTTNCIVPVIDVLDRHFGVKSGAITTIHSAMNDQQVIDAYHDDLRRTRAAGQSIIPVDTKLARGIERILPHMKDKFEAISVRVPTINVTAIDLSVTLEKTVDIATVNHVLESAANGRFNGILGYTDEPLVSCDFNHDPRSSIVDGTQTRVSAGQLVKLLLWCDNEWGFANRMLDTSLAMIAAKRG</sequence>